<reference key="1">
    <citation type="journal article" date="2003" name="Mol. Microbiol.">
        <title>Genome-based analysis of virulence genes in a non-biofilm-forming Staphylococcus epidermidis strain (ATCC 12228).</title>
        <authorList>
            <person name="Zhang Y.-Q."/>
            <person name="Ren S.-X."/>
            <person name="Li H.-L."/>
            <person name="Wang Y.-X."/>
            <person name="Fu G."/>
            <person name="Yang J."/>
            <person name="Qin Z.-Q."/>
            <person name="Miao Y.-G."/>
            <person name="Wang W.-Y."/>
            <person name="Chen R.-S."/>
            <person name="Shen Y."/>
            <person name="Chen Z."/>
            <person name="Yuan Z.-H."/>
            <person name="Zhao G.-P."/>
            <person name="Qu D."/>
            <person name="Danchin A."/>
            <person name="Wen Y.-M."/>
        </authorList>
    </citation>
    <scope>NUCLEOTIDE SEQUENCE [LARGE SCALE GENOMIC DNA]</scope>
    <source>
        <strain>ATCC 12228 / FDA PCI 1200</strain>
    </source>
</reference>
<gene>
    <name evidence="1" type="primary">dnaA</name>
    <name type="ordered locus">SE_0001</name>
</gene>
<comment type="function">
    <text evidence="1">Plays an essential role in the initiation and regulation of chromosomal replication. ATP-DnaA binds to the origin of replication (oriC) to initiate formation of the DNA replication initiation complex once per cell cycle. Binds the DnaA box (a 9 base pair repeat at the origin) and separates the double-stranded (ds)DNA. Forms a right-handed helical filament on oriC DNA; dsDNA binds to the exterior of the filament while single-stranded (ss)DNA is stabiized in the filament's interior. The ATP-DnaA-oriC complex binds and stabilizes one strand of the AT-rich DNA unwinding element (DUE), permitting loading of DNA polymerase. After initiation quickly degrades to an ADP-DnaA complex that is not apt for DNA replication. Binds acidic phospholipids.</text>
</comment>
<comment type="subunit">
    <text evidence="1">Oligomerizes as a right-handed, spiral filament on DNA at oriC.</text>
</comment>
<comment type="subcellular location">
    <subcellularLocation>
        <location evidence="1">Cytoplasm</location>
    </subcellularLocation>
</comment>
<comment type="domain">
    <text evidence="1">Domain I is involved in oligomerization and binding regulators, domain II is flexibile and of varying length in different bacteria, domain III forms the AAA+ region, while domain IV binds dsDNA.</text>
</comment>
<comment type="similarity">
    <text evidence="1">Belongs to the DnaA family.</text>
</comment>
<protein>
    <recommendedName>
        <fullName evidence="1">Chromosomal replication initiator protein DnaA</fullName>
    </recommendedName>
</protein>
<keyword id="KW-0067">ATP-binding</keyword>
<keyword id="KW-0963">Cytoplasm</keyword>
<keyword id="KW-0235">DNA replication</keyword>
<keyword id="KW-0238">DNA-binding</keyword>
<keyword id="KW-0446">Lipid-binding</keyword>
<keyword id="KW-0547">Nucleotide-binding</keyword>
<dbReference type="EMBL" id="AE015929">
    <property type="protein sequence ID" value="AAO03598.1"/>
    <property type="molecule type" value="Genomic_DNA"/>
</dbReference>
<dbReference type="RefSeq" id="NP_763556.1">
    <property type="nucleotide sequence ID" value="NC_004461.1"/>
</dbReference>
<dbReference type="RefSeq" id="WP_002455927.1">
    <property type="nucleotide sequence ID" value="NZ_WBME01000012.1"/>
</dbReference>
<dbReference type="SMR" id="Q8CQK7"/>
<dbReference type="GeneID" id="50017415"/>
<dbReference type="KEGG" id="sep:SE_0001"/>
<dbReference type="PATRIC" id="fig|176280.10.peg.1"/>
<dbReference type="eggNOG" id="COG0593">
    <property type="taxonomic scope" value="Bacteria"/>
</dbReference>
<dbReference type="HOGENOM" id="CLU_026910_3_1_9"/>
<dbReference type="OrthoDB" id="9807019at2"/>
<dbReference type="Proteomes" id="UP000001411">
    <property type="component" value="Chromosome"/>
</dbReference>
<dbReference type="GO" id="GO:0005737">
    <property type="term" value="C:cytoplasm"/>
    <property type="evidence" value="ECO:0007669"/>
    <property type="project" value="UniProtKB-SubCell"/>
</dbReference>
<dbReference type="GO" id="GO:0005886">
    <property type="term" value="C:plasma membrane"/>
    <property type="evidence" value="ECO:0007669"/>
    <property type="project" value="TreeGrafter"/>
</dbReference>
<dbReference type="GO" id="GO:0005524">
    <property type="term" value="F:ATP binding"/>
    <property type="evidence" value="ECO:0007669"/>
    <property type="project" value="UniProtKB-UniRule"/>
</dbReference>
<dbReference type="GO" id="GO:0016887">
    <property type="term" value="F:ATP hydrolysis activity"/>
    <property type="evidence" value="ECO:0007669"/>
    <property type="project" value="InterPro"/>
</dbReference>
<dbReference type="GO" id="GO:0003688">
    <property type="term" value="F:DNA replication origin binding"/>
    <property type="evidence" value="ECO:0007669"/>
    <property type="project" value="UniProtKB-UniRule"/>
</dbReference>
<dbReference type="GO" id="GO:0008289">
    <property type="term" value="F:lipid binding"/>
    <property type="evidence" value="ECO:0007669"/>
    <property type="project" value="UniProtKB-KW"/>
</dbReference>
<dbReference type="GO" id="GO:0006270">
    <property type="term" value="P:DNA replication initiation"/>
    <property type="evidence" value="ECO:0007669"/>
    <property type="project" value="UniProtKB-UniRule"/>
</dbReference>
<dbReference type="GO" id="GO:0006275">
    <property type="term" value="P:regulation of DNA replication"/>
    <property type="evidence" value="ECO:0007669"/>
    <property type="project" value="UniProtKB-UniRule"/>
</dbReference>
<dbReference type="CDD" id="cd00009">
    <property type="entry name" value="AAA"/>
    <property type="match status" value="1"/>
</dbReference>
<dbReference type="CDD" id="cd06571">
    <property type="entry name" value="Bac_DnaA_C"/>
    <property type="match status" value="1"/>
</dbReference>
<dbReference type="FunFam" id="1.10.1750.10:FF:000003">
    <property type="entry name" value="Chromosomal replication initiator protein DnaA"/>
    <property type="match status" value="1"/>
</dbReference>
<dbReference type="FunFam" id="1.10.8.60:FF:000003">
    <property type="entry name" value="Chromosomal replication initiator protein DnaA"/>
    <property type="match status" value="1"/>
</dbReference>
<dbReference type="FunFam" id="3.40.50.300:FF:000150">
    <property type="entry name" value="Chromosomal replication initiator protein DnaA"/>
    <property type="match status" value="1"/>
</dbReference>
<dbReference type="Gene3D" id="1.10.1750.10">
    <property type="match status" value="1"/>
</dbReference>
<dbReference type="Gene3D" id="1.10.8.60">
    <property type="match status" value="1"/>
</dbReference>
<dbReference type="Gene3D" id="3.30.300.180">
    <property type="match status" value="1"/>
</dbReference>
<dbReference type="Gene3D" id="3.40.50.300">
    <property type="entry name" value="P-loop containing nucleotide triphosphate hydrolases"/>
    <property type="match status" value="1"/>
</dbReference>
<dbReference type="HAMAP" id="MF_00377">
    <property type="entry name" value="DnaA_bact"/>
    <property type="match status" value="1"/>
</dbReference>
<dbReference type="InterPro" id="IPR003593">
    <property type="entry name" value="AAA+_ATPase"/>
</dbReference>
<dbReference type="InterPro" id="IPR001957">
    <property type="entry name" value="Chromosome_initiator_DnaA"/>
</dbReference>
<dbReference type="InterPro" id="IPR020591">
    <property type="entry name" value="Chromosome_initiator_DnaA-like"/>
</dbReference>
<dbReference type="InterPro" id="IPR018312">
    <property type="entry name" value="Chromosome_initiator_DnaA_CS"/>
</dbReference>
<dbReference type="InterPro" id="IPR013159">
    <property type="entry name" value="DnaA_C"/>
</dbReference>
<dbReference type="InterPro" id="IPR013317">
    <property type="entry name" value="DnaA_dom"/>
</dbReference>
<dbReference type="InterPro" id="IPR024633">
    <property type="entry name" value="DnaA_N_dom"/>
</dbReference>
<dbReference type="InterPro" id="IPR038454">
    <property type="entry name" value="DnaA_N_sf"/>
</dbReference>
<dbReference type="InterPro" id="IPR027417">
    <property type="entry name" value="P-loop_NTPase"/>
</dbReference>
<dbReference type="InterPro" id="IPR010921">
    <property type="entry name" value="Trp_repressor/repl_initiator"/>
</dbReference>
<dbReference type="NCBIfam" id="TIGR00362">
    <property type="entry name" value="DnaA"/>
    <property type="match status" value="1"/>
</dbReference>
<dbReference type="PANTHER" id="PTHR30050">
    <property type="entry name" value="CHROMOSOMAL REPLICATION INITIATOR PROTEIN DNAA"/>
    <property type="match status" value="1"/>
</dbReference>
<dbReference type="PANTHER" id="PTHR30050:SF2">
    <property type="entry name" value="CHROMOSOMAL REPLICATION INITIATOR PROTEIN DNAA"/>
    <property type="match status" value="1"/>
</dbReference>
<dbReference type="Pfam" id="PF00308">
    <property type="entry name" value="Bac_DnaA"/>
    <property type="match status" value="1"/>
</dbReference>
<dbReference type="Pfam" id="PF08299">
    <property type="entry name" value="Bac_DnaA_C"/>
    <property type="match status" value="1"/>
</dbReference>
<dbReference type="Pfam" id="PF11638">
    <property type="entry name" value="DnaA_N"/>
    <property type="match status" value="1"/>
</dbReference>
<dbReference type="PRINTS" id="PR00051">
    <property type="entry name" value="DNAA"/>
</dbReference>
<dbReference type="SMART" id="SM00382">
    <property type="entry name" value="AAA"/>
    <property type="match status" value="1"/>
</dbReference>
<dbReference type="SMART" id="SM00760">
    <property type="entry name" value="Bac_DnaA_C"/>
    <property type="match status" value="1"/>
</dbReference>
<dbReference type="SUPFAM" id="SSF52540">
    <property type="entry name" value="P-loop containing nucleoside triphosphate hydrolases"/>
    <property type="match status" value="1"/>
</dbReference>
<dbReference type="SUPFAM" id="SSF48295">
    <property type="entry name" value="TrpR-like"/>
    <property type="match status" value="1"/>
</dbReference>
<dbReference type="PROSITE" id="PS01008">
    <property type="entry name" value="DNAA"/>
    <property type="match status" value="1"/>
</dbReference>
<feature type="chain" id="PRO_0000114265" description="Chromosomal replication initiator protein DnaA">
    <location>
        <begin position="1"/>
        <end position="451"/>
    </location>
</feature>
<feature type="region of interest" description="Domain I, interacts with DnaA modulators" evidence="1">
    <location>
        <begin position="1"/>
        <end position="71"/>
    </location>
</feature>
<feature type="region of interest" description="Domain II" evidence="1">
    <location>
        <begin position="71"/>
        <end position="112"/>
    </location>
</feature>
<feature type="region of interest" description="Domain III, AAA+ region" evidence="1">
    <location>
        <begin position="113"/>
        <end position="329"/>
    </location>
</feature>
<feature type="region of interest" description="Domain IV, binds dsDNA" evidence="1">
    <location>
        <begin position="330"/>
        <end position="451"/>
    </location>
</feature>
<feature type="binding site" evidence="1">
    <location>
        <position position="157"/>
    </location>
    <ligand>
        <name>ATP</name>
        <dbReference type="ChEBI" id="CHEBI:30616"/>
    </ligand>
</feature>
<feature type="binding site" evidence="1">
    <location>
        <position position="159"/>
    </location>
    <ligand>
        <name>ATP</name>
        <dbReference type="ChEBI" id="CHEBI:30616"/>
    </ligand>
</feature>
<feature type="binding site" evidence="1">
    <location>
        <position position="160"/>
    </location>
    <ligand>
        <name>ATP</name>
        <dbReference type="ChEBI" id="CHEBI:30616"/>
    </ligand>
</feature>
<feature type="binding site" evidence="1">
    <location>
        <position position="161"/>
    </location>
    <ligand>
        <name>ATP</name>
        <dbReference type="ChEBI" id="CHEBI:30616"/>
    </ligand>
</feature>
<evidence type="ECO:0000255" key="1">
    <source>
        <dbReference type="HAMAP-Rule" id="MF_00377"/>
    </source>
</evidence>
<organism>
    <name type="scientific">Staphylococcus epidermidis (strain ATCC 12228 / FDA PCI 1200)</name>
    <dbReference type="NCBI Taxonomy" id="176280"/>
    <lineage>
        <taxon>Bacteria</taxon>
        <taxon>Bacillati</taxon>
        <taxon>Bacillota</taxon>
        <taxon>Bacilli</taxon>
        <taxon>Bacillales</taxon>
        <taxon>Staphylococcaceae</taxon>
        <taxon>Staphylococcus</taxon>
    </lineage>
</organism>
<proteinExistence type="inferred from homology"/>
<name>DNAA_STAES</name>
<sequence length="451" mass="52097">MSEKEIWDKVLEIAQERISNTSYQTFIKDTQLYSLKNDEAIILVSLPFNASWLNQRYSEIMQAIIYDVIGYEVKPHFISEDELASYNNVNTQEVQEPQVQHSSIDDKTWGKEQFNMHNTFDTFVIGPGNRFPHAASLAVAEAPAEAYNPLFIYGGVGLGKTHLMHAIGHHVLSNKPNAKVIYTSSEKFTNEFIKSIRDNETEAFREKYRKIDVLLIDDIQFIQNKEQTQEEFFHTFNELHQNNKQIVISSDRPPKEIAKLEDRLRSRFEWGLIVDITPPDYETRMAILQKKIEEENLDIPPEALNYIANQIQSNIRELEGALTRLLAYSKLQGKPITTELTAEALKDIIQSPKSKKITIQDIQKVVGQYYSVRIEDFSAKKRTKSIAYPRQIAMYLSRELTDFSLPKIGEEFGGRDHTTVIHAHEKIANDIKSDPTFKQEVENLEKEIRNQ</sequence>
<accession>Q8CQK7</accession>